<sequence length="93" mass="10797">MDGIRYAVFTDKSIQLLGKNQYTSNVESGSTRTEIKHWVELFFGVKVIAMNSHRLRGKARRMGPIMGQTMHYRRMIITLQPGYSIPPLRKKRT</sequence>
<comment type="function">
    <text evidence="1">Binds to 23S rRNA.</text>
</comment>
<comment type="subunit">
    <text evidence="1">Part of the 50S ribosomal subunit.</text>
</comment>
<comment type="subcellular location">
    <subcellularLocation>
        <location>Plastid</location>
        <location>Chloroplast</location>
    </subcellularLocation>
</comment>
<comment type="similarity">
    <text evidence="2">Belongs to the universal ribosomal protein uL23 family.</text>
</comment>
<feature type="chain" id="PRO_0000272906" description="Large ribosomal subunit protein uL23cz/uL23cy">
    <location>
        <begin position="1"/>
        <end position="93"/>
    </location>
</feature>
<keyword id="KW-0150">Chloroplast</keyword>
<keyword id="KW-0934">Plastid</keyword>
<keyword id="KW-0687">Ribonucleoprotein</keyword>
<keyword id="KW-0689">Ribosomal protein</keyword>
<keyword id="KW-0694">RNA-binding</keyword>
<keyword id="KW-0699">rRNA-binding</keyword>
<organism>
    <name type="scientific">Lactuca sativa</name>
    <name type="common">Garden lettuce</name>
    <dbReference type="NCBI Taxonomy" id="4236"/>
    <lineage>
        <taxon>Eukaryota</taxon>
        <taxon>Viridiplantae</taxon>
        <taxon>Streptophyta</taxon>
        <taxon>Embryophyta</taxon>
        <taxon>Tracheophyta</taxon>
        <taxon>Spermatophyta</taxon>
        <taxon>Magnoliopsida</taxon>
        <taxon>eudicotyledons</taxon>
        <taxon>Gunneridae</taxon>
        <taxon>Pentapetalae</taxon>
        <taxon>asterids</taxon>
        <taxon>campanulids</taxon>
        <taxon>Asterales</taxon>
        <taxon>Asteraceae</taxon>
        <taxon>Cichorioideae</taxon>
        <taxon>Cichorieae</taxon>
        <taxon>Lactucinae</taxon>
        <taxon>Lactuca</taxon>
    </lineage>
</organism>
<evidence type="ECO:0000250" key="1"/>
<evidence type="ECO:0000305" key="2"/>
<geneLocation type="chloroplast"/>
<accession>Q332R6</accession>
<protein>
    <recommendedName>
        <fullName evidence="2">Large ribosomal subunit protein uL23cz/uL23cy</fullName>
    </recommendedName>
    <alternativeName>
        <fullName>50S ribosomal protein L23, chloroplastic</fullName>
    </alternativeName>
</protein>
<proteinExistence type="inferred from homology"/>
<name>RK23_LACSA</name>
<dbReference type="EMBL" id="AP007232">
    <property type="protein sequence ID" value="BAE47638.1"/>
    <property type="molecule type" value="Genomic_DNA"/>
</dbReference>
<dbReference type="EMBL" id="AP007232">
    <property type="protein sequence ID" value="BAE47656.1"/>
    <property type="molecule type" value="Genomic_DNA"/>
</dbReference>
<dbReference type="EMBL" id="DQ383816">
    <property type="protein sequence ID" value="ABD47275.1"/>
    <property type="molecule type" value="Genomic_DNA"/>
</dbReference>
<dbReference type="EMBL" id="DQ383816">
    <property type="protein sequence ID" value="ABD47297.1"/>
    <property type="molecule type" value="Genomic_DNA"/>
</dbReference>
<dbReference type="SMR" id="Q332R6"/>
<dbReference type="KEGG" id="lsv:3772817"/>
<dbReference type="KEGG" id="lsv:3772818"/>
<dbReference type="OrthoDB" id="1848840at2759"/>
<dbReference type="GO" id="GO:0009507">
    <property type="term" value="C:chloroplast"/>
    <property type="evidence" value="ECO:0007669"/>
    <property type="project" value="UniProtKB-SubCell"/>
</dbReference>
<dbReference type="GO" id="GO:1990904">
    <property type="term" value="C:ribonucleoprotein complex"/>
    <property type="evidence" value="ECO:0007669"/>
    <property type="project" value="UniProtKB-KW"/>
</dbReference>
<dbReference type="GO" id="GO:0005840">
    <property type="term" value="C:ribosome"/>
    <property type="evidence" value="ECO:0007669"/>
    <property type="project" value="UniProtKB-KW"/>
</dbReference>
<dbReference type="GO" id="GO:0003729">
    <property type="term" value="F:mRNA binding"/>
    <property type="evidence" value="ECO:0007669"/>
    <property type="project" value="UniProtKB-ARBA"/>
</dbReference>
<dbReference type="GO" id="GO:0019843">
    <property type="term" value="F:rRNA binding"/>
    <property type="evidence" value="ECO:0007669"/>
    <property type="project" value="UniProtKB-UniRule"/>
</dbReference>
<dbReference type="GO" id="GO:0003735">
    <property type="term" value="F:structural constituent of ribosome"/>
    <property type="evidence" value="ECO:0007669"/>
    <property type="project" value="InterPro"/>
</dbReference>
<dbReference type="GO" id="GO:0006412">
    <property type="term" value="P:translation"/>
    <property type="evidence" value="ECO:0007669"/>
    <property type="project" value="UniProtKB-UniRule"/>
</dbReference>
<dbReference type="FunFam" id="3.30.70.330:FF:000002">
    <property type="entry name" value="50S ribosomal protein L23, chloroplastic"/>
    <property type="match status" value="1"/>
</dbReference>
<dbReference type="Gene3D" id="3.30.70.330">
    <property type="match status" value="1"/>
</dbReference>
<dbReference type="HAMAP" id="MF_01369_B">
    <property type="entry name" value="Ribosomal_uL23_B"/>
    <property type="match status" value="1"/>
</dbReference>
<dbReference type="InterPro" id="IPR012677">
    <property type="entry name" value="Nucleotide-bd_a/b_plait_sf"/>
</dbReference>
<dbReference type="InterPro" id="IPR013025">
    <property type="entry name" value="Ribosomal_uL23-like"/>
</dbReference>
<dbReference type="InterPro" id="IPR012678">
    <property type="entry name" value="Ribosomal_uL23/eL15/eS24_sf"/>
</dbReference>
<dbReference type="InterPro" id="IPR001014">
    <property type="entry name" value="Ribosomal_uL23_CS"/>
</dbReference>
<dbReference type="PANTHER" id="PTHR11620">
    <property type="entry name" value="60S RIBOSOMAL PROTEIN L23A"/>
    <property type="match status" value="1"/>
</dbReference>
<dbReference type="Pfam" id="PF00276">
    <property type="entry name" value="Ribosomal_L23"/>
    <property type="match status" value="1"/>
</dbReference>
<dbReference type="SUPFAM" id="SSF54189">
    <property type="entry name" value="Ribosomal proteins S24e, L23 and L15e"/>
    <property type="match status" value="1"/>
</dbReference>
<dbReference type="PROSITE" id="PS00050">
    <property type="entry name" value="RIBOSOMAL_L23"/>
    <property type="match status" value="1"/>
</dbReference>
<reference key="1">
    <citation type="journal article" date="2006" name="Transgenic Res.">
        <title>Efficient and stable transformation of Lactuca sativa L. cv. Cisco (lettuce) plastids.</title>
        <authorList>
            <person name="Kanamoto H."/>
            <person name="Yamashita A."/>
            <person name="Asao H."/>
            <person name="Okumura S."/>
            <person name="Takase H."/>
            <person name="Hattori M."/>
            <person name="Yokota A."/>
            <person name="Tomizawa K."/>
        </authorList>
    </citation>
    <scope>NUCLEOTIDE SEQUENCE [LARGE SCALE GENOMIC DNA]</scope>
    <source>
        <strain>cv. Cisco</strain>
    </source>
</reference>
<reference key="2">
    <citation type="submission" date="2006-01" db="EMBL/GenBank/DDBJ databases">
        <title>A comparison of the first two published chloroplast genomes in Asteraceae: Lactuca and Helianthus.</title>
        <authorList>
            <person name="Timme R.E."/>
            <person name="Kuehl J.V."/>
            <person name="Boore J.L."/>
            <person name="Jansen R.K."/>
        </authorList>
    </citation>
    <scope>NUCLEOTIDE SEQUENCE [LARGE SCALE GENOMIC DNA]</scope>
    <source>
        <strain>cv. Salinas</strain>
    </source>
</reference>
<gene>
    <name type="primary">rpl23-A</name>
</gene>
<gene>
    <name type="primary">rpl23-B</name>
</gene>